<evidence type="ECO:0000255" key="1">
    <source>
        <dbReference type="HAMAP-Rule" id="MF_00197"/>
    </source>
</evidence>
<feature type="chain" id="PRO_0000149867" description="Diaminopimelate epimerase">
    <location>
        <begin position="1"/>
        <end position="270"/>
    </location>
</feature>
<feature type="active site" description="Proton donor" evidence="1">
    <location>
        <position position="75"/>
    </location>
</feature>
<feature type="active site" description="Proton acceptor" evidence="1">
    <location>
        <position position="213"/>
    </location>
</feature>
<feature type="binding site" evidence="1">
    <location>
        <position position="15"/>
    </location>
    <ligand>
        <name>substrate</name>
    </ligand>
</feature>
<feature type="binding site" evidence="1">
    <location>
        <position position="49"/>
    </location>
    <ligand>
        <name>substrate</name>
    </ligand>
</feature>
<feature type="binding site" evidence="1">
    <location>
        <position position="66"/>
    </location>
    <ligand>
        <name>substrate</name>
    </ligand>
</feature>
<feature type="binding site" evidence="1">
    <location>
        <begin position="76"/>
        <end position="77"/>
    </location>
    <ligand>
        <name>substrate</name>
    </ligand>
</feature>
<feature type="binding site" evidence="1">
    <location>
        <position position="155"/>
    </location>
    <ligand>
        <name>substrate</name>
    </ligand>
</feature>
<feature type="binding site" evidence="1">
    <location>
        <position position="187"/>
    </location>
    <ligand>
        <name>substrate</name>
    </ligand>
</feature>
<feature type="binding site" evidence="1">
    <location>
        <begin position="204"/>
        <end position="205"/>
    </location>
    <ligand>
        <name>substrate</name>
    </ligand>
</feature>
<feature type="binding site" evidence="1">
    <location>
        <begin position="214"/>
        <end position="215"/>
    </location>
    <ligand>
        <name>substrate</name>
    </ligand>
</feature>
<feature type="site" description="Could be important to modulate the pK values of the two catalytic cysteine residues" evidence="1">
    <location>
        <position position="157"/>
    </location>
</feature>
<feature type="site" description="Could be important to modulate the pK values of the two catalytic cysteine residues" evidence="1">
    <location>
        <position position="204"/>
    </location>
</feature>
<reference key="1">
    <citation type="journal article" date="1998" name="Nature">
        <title>The genome sequence of Rickettsia prowazekii and the origin of mitochondria.</title>
        <authorList>
            <person name="Andersson S.G.E."/>
            <person name="Zomorodipour A."/>
            <person name="Andersson J.O."/>
            <person name="Sicheritz-Ponten T."/>
            <person name="Alsmark U.C.M."/>
            <person name="Podowski R.M."/>
            <person name="Naeslund A.K."/>
            <person name="Eriksson A.-S."/>
            <person name="Winkler H.H."/>
            <person name="Kurland C.G."/>
        </authorList>
    </citation>
    <scope>NUCLEOTIDE SEQUENCE [LARGE SCALE GENOMIC DNA]</scope>
    <source>
        <strain>Madrid E</strain>
    </source>
</reference>
<sequence length="270" mass="30185">MINKINFVKMHGLGNDFVIVNKRDLATSYNLSHLAKNMADRHTGIGCDQCIIYEENNDFYTMIIYNIDGSSAKLCGNAIRCLAKLIYLDTGKQNITVMVGKKKLLCNVKAANKISVNVGNVSFNETWMPSRDKIWKFAERYMLDLKEMLCVDIGNPHLIIFSKLEPQDKTIIGQKLQAKELFADGVNVNFAEVKDNKIYLSVWERGAGLTLACGSGACASFAAGLKLGFVHSPSTVVFEYGNLIMREEDGNIIMQGAATFVMRGEYYYEK</sequence>
<accession>Q9ZDB7</accession>
<comment type="function">
    <text evidence="1">Catalyzes the stereoinversion of LL-2,6-diaminopimelate (L,L-DAP) to meso-diaminopimelate (meso-DAP), a precursor of L-lysine and an essential component of the bacterial peptidoglycan.</text>
</comment>
<comment type="catalytic activity">
    <reaction evidence="1">
        <text>(2S,6S)-2,6-diaminopimelate = meso-2,6-diaminopimelate</text>
        <dbReference type="Rhea" id="RHEA:15393"/>
        <dbReference type="ChEBI" id="CHEBI:57609"/>
        <dbReference type="ChEBI" id="CHEBI:57791"/>
        <dbReference type="EC" id="5.1.1.7"/>
    </reaction>
</comment>
<comment type="pathway">
    <text evidence="1">Amino-acid biosynthesis; L-lysine biosynthesis via DAP pathway; DL-2,6-diaminopimelate from LL-2,6-diaminopimelate: step 1/1.</text>
</comment>
<comment type="subunit">
    <text evidence="1">Homodimer.</text>
</comment>
<comment type="subcellular location">
    <subcellularLocation>
        <location evidence="1">Cytoplasm</location>
    </subcellularLocation>
</comment>
<comment type="similarity">
    <text evidence="1">Belongs to the diaminopimelate epimerase family.</text>
</comment>
<protein>
    <recommendedName>
        <fullName evidence="1">Diaminopimelate epimerase</fullName>
        <shortName evidence="1">DAP epimerase</shortName>
        <ecNumber evidence="1">5.1.1.7</ecNumber>
    </recommendedName>
    <alternativeName>
        <fullName evidence="1">PLP-independent amino acid racemase</fullName>
    </alternativeName>
</protein>
<name>DAPF_RICPR</name>
<keyword id="KW-0028">Amino-acid biosynthesis</keyword>
<keyword id="KW-0963">Cytoplasm</keyword>
<keyword id="KW-0413">Isomerase</keyword>
<keyword id="KW-0457">Lysine biosynthesis</keyword>
<keyword id="KW-1185">Reference proteome</keyword>
<dbReference type="EC" id="5.1.1.7" evidence="1"/>
<dbReference type="EMBL" id="AJ235271">
    <property type="protein sequence ID" value="CAA14872.1"/>
    <property type="molecule type" value="Genomic_DNA"/>
</dbReference>
<dbReference type="PIR" id="F71699">
    <property type="entry name" value="F71699"/>
</dbReference>
<dbReference type="RefSeq" id="NP_220796.1">
    <property type="nucleotide sequence ID" value="NC_000963.1"/>
</dbReference>
<dbReference type="RefSeq" id="WP_010886289.1">
    <property type="nucleotide sequence ID" value="NC_000963.1"/>
</dbReference>
<dbReference type="SMR" id="Q9ZDB7"/>
<dbReference type="STRING" id="272947.gene:17555495"/>
<dbReference type="EnsemblBacteria" id="CAA14872">
    <property type="protein sequence ID" value="CAA14872"/>
    <property type="gene ID" value="CAA14872"/>
</dbReference>
<dbReference type="GeneID" id="57569540"/>
<dbReference type="KEGG" id="rpr:RP415"/>
<dbReference type="PATRIC" id="fig|272947.5.peg.428"/>
<dbReference type="eggNOG" id="COG0253">
    <property type="taxonomic scope" value="Bacteria"/>
</dbReference>
<dbReference type="HOGENOM" id="CLU_053306_1_0_5"/>
<dbReference type="OrthoDB" id="9805408at2"/>
<dbReference type="UniPathway" id="UPA00034">
    <property type="reaction ID" value="UER00025"/>
</dbReference>
<dbReference type="Proteomes" id="UP000002480">
    <property type="component" value="Chromosome"/>
</dbReference>
<dbReference type="GO" id="GO:0005829">
    <property type="term" value="C:cytosol"/>
    <property type="evidence" value="ECO:0007669"/>
    <property type="project" value="TreeGrafter"/>
</dbReference>
<dbReference type="GO" id="GO:0008837">
    <property type="term" value="F:diaminopimelate epimerase activity"/>
    <property type="evidence" value="ECO:0007669"/>
    <property type="project" value="UniProtKB-UniRule"/>
</dbReference>
<dbReference type="GO" id="GO:0009089">
    <property type="term" value="P:lysine biosynthetic process via diaminopimelate"/>
    <property type="evidence" value="ECO:0007669"/>
    <property type="project" value="UniProtKB-UniRule"/>
</dbReference>
<dbReference type="Gene3D" id="3.10.310.10">
    <property type="entry name" value="Diaminopimelate Epimerase, Chain A, domain 1"/>
    <property type="match status" value="2"/>
</dbReference>
<dbReference type="HAMAP" id="MF_00197">
    <property type="entry name" value="DAP_epimerase"/>
    <property type="match status" value="1"/>
</dbReference>
<dbReference type="InterPro" id="IPR018510">
    <property type="entry name" value="DAP_epimerase_AS"/>
</dbReference>
<dbReference type="InterPro" id="IPR001653">
    <property type="entry name" value="DAP_epimerase_DapF"/>
</dbReference>
<dbReference type="NCBIfam" id="TIGR00652">
    <property type="entry name" value="DapF"/>
    <property type="match status" value="1"/>
</dbReference>
<dbReference type="PANTHER" id="PTHR31689:SF0">
    <property type="entry name" value="DIAMINOPIMELATE EPIMERASE"/>
    <property type="match status" value="1"/>
</dbReference>
<dbReference type="PANTHER" id="PTHR31689">
    <property type="entry name" value="DIAMINOPIMELATE EPIMERASE, CHLOROPLASTIC"/>
    <property type="match status" value="1"/>
</dbReference>
<dbReference type="Pfam" id="PF01678">
    <property type="entry name" value="DAP_epimerase"/>
    <property type="match status" value="2"/>
</dbReference>
<dbReference type="SUPFAM" id="SSF54506">
    <property type="entry name" value="Diaminopimelate epimerase-like"/>
    <property type="match status" value="2"/>
</dbReference>
<dbReference type="PROSITE" id="PS01326">
    <property type="entry name" value="DAP_EPIMERASE"/>
    <property type="match status" value="1"/>
</dbReference>
<gene>
    <name evidence="1" type="primary">dapF</name>
    <name type="ordered locus">RP415</name>
</gene>
<organism>
    <name type="scientific">Rickettsia prowazekii (strain Madrid E)</name>
    <dbReference type="NCBI Taxonomy" id="272947"/>
    <lineage>
        <taxon>Bacteria</taxon>
        <taxon>Pseudomonadati</taxon>
        <taxon>Pseudomonadota</taxon>
        <taxon>Alphaproteobacteria</taxon>
        <taxon>Rickettsiales</taxon>
        <taxon>Rickettsiaceae</taxon>
        <taxon>Rickettsieae</taxon>
        <taxon>Rickettsia</taxon>
        <taxon>typhus group</taxon>
    </lineage>
</organism>
<proteinExistence type="inferred from homology"/>